<sequence length="652" mass="72280">MNKRMNELVALLNRYATEYYTSDNPSVSDSEYDRLYRELVELETAYPEQVLADSPTHRVGGKVLDGFEKYSHQYPLYSLQDAFSREELDAFDARVRKEVAHPTYICELKIDGLSISLTYEKGILVAGVTRGDGSIGENITENLKRVKDIPLTLTEELDITVRGECYMPRASFDQVNQARQENGEPEFANPRNAAAGTLRQLDTAVVAKRNLATFLYQEASPSTRDSQEKGLKYLEQLGFVVNPKRILAENIDEIWNFIQEVGQERENLPYDIDGVVIKVNDLASQEELGFTVKAPKWAVAYKFPAEEKEAQLLSVDWTVGRTGVVTPTANLTPVQLAGTTVSRATLHNVDYIAEKDIRKDDTVIVYKAGDIIPAVLRVVESKRVSEEKLDIPTNCPSCNSDLLHFEDEVALRCINPRCPAQIMEGLIHFASRDAMNITGLGPSIVEKLFAANLVKDVADIYRLQEEDFLLLEGVKEKSAAKLYQAIQASKENSAEKLLFGLGIRHVGSKASQLLLQYFHSIENLYQADSEEVASIESLGGVIAKSLQTYFATEGSEILLRELKETGVNLDYKGQTVVADAALSGLTVVLTGKLERLKRSEAKSKLESLGAKVTGSVSKKTDLVVVGADAGSKLQKAQELGIQVRDEAWLESL</sequence>
<protein>
    <recommendedName>
        <fullName evidence="1">DNA ligase</fullName>
        <ecNumber evidence="1">6.5.1.2</ecNumber>
    </recommendedName>
    <alternativeName>
        <fullName evidence="1">Polydeoxyribonucleotide synthase [NAD(+)]</fullName>
    </alternativeName>
</protein>
<evidence type="ECO:0000255" key="1">
    <source>
        <dbReference type="HAMAP-Rule" id="MF_01588"/>
    </source>
</evidence>
<name>DNLJ_STRP7</name>
<accession>C1C7B1</accession>
<gene>
    <name evidence="1" type="primary">ligA</name>
    <name type="ordered locus">SP70585_1188</name>
</gene>
<feature type="chain" id="PRO_0000380480" description="DNA ligase">
    <location>
        <begin position="1"/>
        <end position="652"/>
    </location>
</feature>
<feature type="domain" description="BRCT" evidence="1">
    <location>
        <begin position="577"/>
        <end position="652"/>
    </location>
</feature>
<feature type="active site" description="N6-AMP-lysine intermediate" evidence="1">
    <location>
        <position position="109"/>
    </location>
</feature>
<feature type="binding site" evidence="1">
    <location>
        <begin position="29"/>
        <end position="33"/>
    </location>
    <ligand>
        <name>NAD(+)</name>
        <dbReference type="ChEBI" id="CHEBI:57540"/>
    </ligand>
</feature>
<feature type="binding site" evidence="1">
    <location>
        <begin position="78"/>
        <end position="79"/>
    </location>
    <ligand>
        <name>NAD(+)</name>
        <dbReference type="ChEBI" id="CHEBI:57540"/>
    </ligand>
</feature>
<feature type="binding site" evidence="1">
    <location>
        <position position="107"/>
    </location>
    <ligand>
        <name>NAD(+)</name>
        <dbReference type="ChEBI" id="CHEBI:57540"/>
    </ligand>
</feature>
<feature type="binding site" evidence="1">
    <location>
        <position position="130"/>
    </location>
    <ligand>
        <name>NAD(+)</name>
        <dbReference type="ChEBI" id="CHEBI:57540"/>
    </ligand>
</feature>
<feature type="binding site" evidence="1">
    <location>
        <position position="164"/>
    </location>
    <ligand>
        <name>NAD(+)</name>
        <dbReference type="ChEBI" id="CHEBI:57540"/>
    </ligand>
</feature>
<feature type="binding site" evidence="1">
    <location>
        <position position="278"/>
    </location>
    <ligand>
        <name>NAD(+)</name>
        <dbReference type="ChEBI" id="CHEBI:57540"/>
    </ligand>
</feature>
<feature type="binding site" evidence="1">
    <location>
        <position position="302"/>
    </location>
    <ligand>
        <name>NAD(+)</name>
        <dbReference type="ChEBI" id="CHEBI:57540"/>
    </ligand>
</feature>
<feature type="binding site" evidence="1">
    <location>
        <position position="395"/>
    </location>
    <ligand>
        <name>Zn(2+)</name>
        <dbReference type="ChEBI" id="CHEBI:29105"/>
    </ligand>
</feature>
<feature type="binding site" evidence="1">
    <location>
        <position position="398"/>
    </location>
    <ligand>
        <name>Zn(2+)</name>
        <dbReference type="ChEBI" id="CHEBI:29105"/>
    </ligand>
</feature>
<feature type="binding site" evidence="1">
    <location>
        <position position="413"/>
    </location>
    <ligand>
        <name>Zn(2+)</name>
        <dbReference type="ChEBI" id="CHEBI:29105"/>
    </ligand>
</feature>
<feature type="binding site" evidence="1">
    <location>
        <position position="418"/>
    </location>
    <ligand>
        <name>Zn(2+)</name>
        <dbReference type="ChEBI" id="CHEBI:29105"/>
    </ligand>
</feature>
<comment type="function">
    <text evidence="1">DNA ligase that catalyzes the formation of phosphodiester linkages between 5'-phosphoryl and 3'-hydroxyl groups in double-stranded DNA using NAD as a coenzyme and as the energy source for the reaction. It is essential for DNA replication and repair of damaged DNA.</text>
</comment>
<comment type="catalytic activity">
    <reaction evidence="1">
        <text>NAD(+) + (deoxyribonucleotide)n-3'-hydroxyl + 5'-phospho-(deoxyribonucleotide)m = (deoxyribonucleotide)n+m + AMP + beta-nicotinamide D-nucleotide.</text>
        <dbReference type="EC" id="6.5.1.2"/>
    </reaction>
</comment>
<comment type="cofactor">
    <cofactor evidence="1">
        <name>Mg(2+)</name>
        <dbReference type="ChEBI" id="CHEBI:18420"/>
    </cofactor>
    <cofactor evidence="1">
        <name>Mn(2+)</name>
        <dbReference type="ChEBI" id="CHEBI:29035"/>
    </cofactor>
</comment>
<comment type="similarity">
    <text evidence="1">Belongs to the NAD-dependent DNA ligase family. LigA subfamily.</text>
</comment>
<dbReference type="EC" id="6.5.1.2" evidence="1"/>
<dbReference type="EMBL" id="CP000918">
    <property type="protein sequence ID" value="ACO16675.1"/>
    <property type="molecule type" value="Genomic_DNA"/>
</dbReference>
<dbReference type="RefSeq" id="WP_001042606.1">
    <property type="nucleotide sequence ID" value="NC_012468.1"/>
</dbReference>
<dbReference type="SMR" id="C1C7B1"/>
<dbReference type="KEGG" id="snm:SP70585_1188"/>
<dbReference type="HOGENOM" id="CLU_007764_2_1_9"/>
<dbReference type="Proteomes" id="UP000002211">
    <property type="component" value="Chromosome"/>
</dbReference>
<dbReference type="GO" id="GO:0005829">
    <property type="term" value="C:cytosol"/>
    <property type="evidence" value="ECO:0007669"/>
    <property type="project" value="TreeGrafter"/>
</dbReference>
<dbReference type="GO" id="GO:0003677">
    <property type="term" value="F:DNA binding"/>
    <property type="evidence" value="ECO:0007669"/>
    <property type="project" value="InterPro"/>
</dbReference>
<dbReference type="GO" id="GO:0003911">
    <property type="term" value="F:DNA ligase (NAD+) activity"/>
    <property type="evidence" value="ECO:0007669"/>
    <property type="project" value="UniProtKB-UniRule"/>
</dbReference>
<dbReference type="GO" id="GO:0046872">
    <property type="term" value="F:metal ion binding"/>
    <property type="evidence" value="ECO:0007669"/>
    <property type="project" value="UniProtKB-KW"/>
</dbReference>
<dbReference type="GO" id="GO:0006281">
    <property type="term" value="P:DNA repair"/>
    <property type="evidence" value="ECO:0007669"/>
    <property type="project" value="UniProtKB-KW"/>
</dbReference>
<dbReference type="GO" id="GO:0006260">
    <property type="term" value="P:DNA replication"/>
    <property type="evidence" value="ECO:0007669"/>
    <property type="project" value="UniProtKB-KW"/>
</dbReference>
<dbReference type="CDD" id="cd17748">
    <property type="entry name" value="BRCT_DNA_ligase_like"/>
    <property type="match status" value="1"/>
</dbReference>
<dbReference type="CDD" id="cd00114">
    <property type="entry name" value="LIGANc"/>
    <property type="match status" value="1"/>
</dbReference>
<dbReference type="FunFam" id="1.10.150.20:FF:000006">
    <property type="entry name" value="DNA ligase"/>
    <property type="match status" value="1"/>
</dbReference>
<dbReference type="FunFam" id="1.10.150.20:FF:000007">
    <property type="entry name" value="DNA ligase"/>
    <property type="match status" value="1"/>
</dbReference>
<dbReference type="FunFam" id="1.10.287.610:FF:000002">
    <property type="entry name" value="DNA ligase"/>
    <property type="match status" value="1"/>
</dbReference>
<dbReference type="FunFam" id="2.40.50.140:FF:000012">
    <property type="entry name" value="DNA ligase"/>
    <property type="match status" value="1"/>
</dbReference>
<dbReference type="FunFam" id="3.30.470.30:FF:000001">
    <property type="entry name" value="DNA ligase"/>
    <property type="match status" value="1"/>
</dbReference>
<dbReference type="FunFam" id="3.40.50.10190:FF:000045">
    <property type="entry name" value="DNA ligase"/>
    <property type="match status" value="1"/>
</dbReference>
<dbReference type="Gene3D" id="6.20.10.30">
    <property type="match status" value="1"/>
</dbReference>
<dbReference type="Gene3D" id="1.10.150.20">
    <property type="entry name" value="5' to 3' exonuclease, C-terminal subdomain"/>
    <property type="match status" value="2"/>
</dbReference>
<dbReference type="Gene3D" id="3.40.50.10190">
    <property type="entry name" value="BRCT domain"/>
    <property type="match status" value="1"/>
</dbReference>
<dbReference type="Gene3D" id="3.30.470.30">
    <property type="entry name" value="DNA ligase/mRNA capping enzyme"/>
    <property type="match status" value="1"/>
</dbReference>
<dbReference type="Gene3D" id="1.10.287.610">
    <property type="entry name" value="Helix hairpin bin"/>
    <property type="match status" value="1"/>
</dbReference>
<dbReference type="Gene3D" id="2.40.50.140">
    <property type="entry name" value="Nucleic acid-binding proteins"/>
    <property type="match status" value="1"/>
</dbReference>
<dbReference type="HAMAP" id="MF_01588">
    <property type="entry name" value="DNA_ligase_A"/>
    <property type="match status" value="1"/>
</dbReference>
<dbReference type="InterPro" id="IPR001357">
    <property type="entry name" value="BRCT_dom"/>
</dbReference>
<dbReference type="InterPro" id="IPR036420">
    <property type="entry name" value="BRCT_dom_sf"/>
</dbReference>
<dbReference type="InterPro" id="IPR041663">
    <property type="entry name" value="DisA/LigA_HHH"/>
</dbReference>
<dbReference type="InterPro" id="IPR001679">
    <property type="entry name" value="DNA_ligase"/>
</dbReference>
<dbReference type="InterPro" id="IPR018239">
    <property type="entry name" value="DNA_ligase_AS"/>
</dbReference>
<dbReference type="InterPro" id="IPR033136">
    <property type="entry name" value="DNA_ligase_CS"/>
</dbReference>
<dbReference type="InterPro" id="IPR013839">
    <property type="entry name" value="DNAligase_adenylation"/>
</dbReference>
<dbReference type="InterPro" id="IPR013840">
    <property type="entry name" value="DNAligase_N"/>
</dbReference>
<dbReference type="InterPro" id="IPR003583">
    <property type="entry name" value="Hlx-hairpin-Hlx_DNA-bd_motif"/>
</dbReference>
<dbReference type="InterPro" id="IPR012340">
    <property type="entry name" value="NA-bd_OB-fold"/>
</dbReference>
<dbReference type="InterPro" id="IPR004150">
    <property type="entry name" value="NAD_DNA_ligase_OB"/>
</dbReference>
<dbReference type="InterPro" id="IPR010994">
    <property type="entry name" value="RuvA_2-like"/>
</dbReference>
<dbReference type="InterPro" id="IPR004149">
    <property type="entry name" value="Znf_DNAligase_C4"/>
</dbReference>
<dbReference type="NCBIfam" id="TIGR00575">
    <property type="entry name" value="dnlj"/>
    <property type="match status" value="1"/>
</dbReference>
<dbReference type="NCBIfam" id="NF005932">
    <property type="entry name" value="PRK07956.1"/>
    <property type="match status" value="1"/>
</dbReference>
<dbReference type="PANTHER" id="PTHR23389">
    <property type="entry name" value="CHROMOSOME TRANSMISSION FIDELITY FACTOR 18"/>
    <property type="match status" value="1"/>
</dbReference>
<dbReference type="PANTHER" id="PTHR23389:SF9">
    <property type="entry name" value="DNA LIGASE"/>
    <property type="match status" value="1"/>
</dbReference>
<dbReference type="Pfam" id="PF00533">
    <property type="entry name" value="BRCT"/>
    <property type="match status" value="1"/>
</dbReference>
<dbReference type="Pfam" id="PF01653">
    <property type="entry name" value="DNA_ligase_aden"/>
    <property type="match status" value="1"/>
</dbReference>
<dbReference type="Pfam" id="PF03120">
    <property type="entry name" value="DNA_ligase_OB"/>
    <property type="match status" value="1"/>
</dbReference>
<dbReference type="Pfam" id="PF03119">
    <property type="entry name" value="DNA_ligase_ZBD"/>
    <property type="match status" value="1"/>
</dbReference>
<dbReference type="Pfam" id="PF12826">
    <property type="entry name" value="HHH_2"/>
    <property type="match status" value="1"/>
</dbReference>
<dbReference type="Pfam" id="PF14520">
    <property type="entry name" value="HHH_5"/>
    <property type="match status" value="1"/>
</dbReference>
<dbReference type="PIRSF" id="PIRSF001604">
    <property type="entry name" value="LigA"/>
    <property type="match status" value="1"/>
</dbReference>
<dbReference type="SMART" id="SM00292">
    <property type="entry name" value="BRCT"/>
    <property type="match status" value="1"/>
</dbReference>
<dbReference type="SMART" id="SM00278">
    <property type="entry name" value="HhH1"/>
    <property type="match status" value="2"/>
</dbReference>
<dbReference type="SMART" id="SM00532">
    <property type="entry name" value="LIGANc"/>
    <property type="match status" value="1"/>
</dbReference>
<dbReference type="SUPFAM" id="SSF52113">
    <property type="entry name" value="BRCT domain"/>
    <property type="match status" value="1"/>
</dbReference>
<dbReference type="SUPFAM" id="SSF56091">
    <property type="entry name" value="DNA ligase/mRNA capping enzyme, catalytic domain"/>
    <property type="match status" value="1"/>
</dbReference>
<dbReference type="SUPFAM" id="SSF50249">
    <property type="entry name" value="Nucleic acid-binding proteins"/>
    <property type="match status" value="1"/>
</dbReference>
<dbReference type="SUPFAM" id="SSF47781">
    <property type="entry name" value="RuvA domain 2-like"/>
    <property type="match status" value="1"/>
</dbReference>
<dbReference type="PROSITE" id="PS50172">
    <property type="entry name" value="BRCT"/>
    <property type="match status" value="1"/>
</dbReference>
<dbReference type="PROSITE" id="PS01055">
    <property type="entry name" value="DNA_LIGASE_N1"/>
    <property type="match status" value="1"/>
</dbReference>
<dbReference type="PROSITE" id="PS01056">
    <property type="entry name" value="DNA_LIGASE_N2"/>
    <property type="match status" value="1"/>
</dbReference>
<proteinExistence type="inferred from homology"/>
<organism>
    <name type="scientific">Streptococcus pneumoniae (strain 70585)</name>
    <dbReference type="NCBI Taxonomy" id="488221"/>
    <lineage>
        <taxon>Bacteria</taxon>
        <taxon>Bacillati</taxon>
        <taxon>Bacillota</taxon>
        <taxon>Bacilli</taxon>
        <taxon>Lactobacillales</taxon>
        <taxon>Streptococcaceae</taxon>
        <taxon>Streptococcus</taxon>
    </lineage>
</organism>
<reference key="1">
    <citation type="journal article" date="2010" name="Genome Biol.">
        <title>Structure and dynamics of the pan-genome of Streptococcus pneumoniae and closely related species.</title>
        <authorList>
            <person name="Donati C."/>
            <person name="Hiller N.L."/>
            <person name="Tettelin H."/>
            <person name="Muzzi A."/>
            <person name="Croucher N.J."/>
            <person name="Angiuoli S.V."/>
            <person name="Oggioni M."/>
            <person name="Dunning Hotopp J.C."/>
            <person name="Hu F.Z."/>
            <person name="Riley D.R."/>
            <person name="Covacci A."/>
            <person name="Mitchell T.J."/>
            <person name="Bentley S.D."/>
            <person name="Kilian M."/>
            <person name="Ehrlich G.D."/>
            <person name="Rappuoli R."/>
            <person name="Moxon E.R."/>
            <person name="Masignani V."/>
        </authorList>
    </citation>
    <scope>NUCLEOTIDE SEQUENCE [LARGE SCALE GENOMIC DNA]</scope>
    <source>
        <strain>70585</strain>
    </source>
</reference>
<keyword id="KW-0227">DNA damage</keyword>
<keyword id="KW-0234">DNA repair</keyword>
<keyword id="KW-0235">DNA replication</keyword>
<keyword id="KW-0436">Ligase</keyword>
<keyword id="KW-0460">Magnesium</keyword>
<keyword id="KW-0464">Manganese</keyword>
<keyword id="KW-0479">Metal-binding</keyword>
<keyword id="KW-0520">NAD</keyword>
<keyword id="KW-0862">Zinc</keyword>